<evidence type="ECO:0000255" key="1">
    <source>
        <dbReference type="HAMAP-Rule" id="MF_01537"/>
    </source>
</evidence>
<protein>
    <recommendedName>
        <fullName evidence="1">Pyrimidine/purine nucleoside phosphorylase</fullName>
        <ecNumber evidence="1">2.4.2.1</ecNumber>
        <ecNumber evidence="1">2.4.2.2</ecNumber>
    </recommendedName>
    <alternativeName>
        <fullName evidence="1">Adenosine phosphorylase</fullName>
    </alternativeName>
    <alternativeName>
        <fullName evidence="1">Cytidine phosphorylase</fullName>
    </alternativeName>
    <alternativeName>
        <fullName evidence="1">Guanosine phosphorylase</fullName>
    </alternativeName>
    <alternativeName>
        <fullName evidence="1">Inosine phosphorylase</fullName>
    </alternativeName>
    <alternativeName>
        <fullName evidence="1">Thymidine phosphorylase</fullName>
    </alternativeName>
    <alternativeName>
        <fullName evidence="1">Uridine phosphorylase</fullName>
    </alternativeName>
    <alternativeName>
        <fullName evidence="1">Xanthosine phosphorylase</fullName>
    </alternativeName>
</protein>
<proteinExistence type="inferred from homology"/>
<sequence>MSQFTNVAITKEANIYFDGNVTSRSVHFADGTKKTLGIMLPGDYEFNTGAKELMEILSGDLEIQLVGEEWRKISAGESFEVPANSSFKLKIYKITDYCCSFLG</sequence>
<gene>
    <name evidence="1" type="primary">ppnP</name>
    <name type="ordered locus">Cag_0281</name>
</gene>
<name>PPNP_CHLCH</name>
<keyword id="KW-0328">Glycosyltransferase</keyword>
<keyword id="KW-0808">Transferase</keyword>
<organism>
    <name type="scientific">Chlorobium chlorochromatii (strain CaD3)</name>
    <dbReference type="NCBI Taxonomy" id="340177"/>
    <lineage>
        <taxon>Bacteria</taxon>
        <taxon>Pseudomonadati</taxon>
        <taxon>Chlorobiota</taxon>
        <taxon>Chlorobiia</taxon>
        <taxon>Chlorobiales</taxon>
        <taxon>Chlorobiaceae</taxon>
        <taxon>Chlorobium/Pelodictyon group</taxon>
        <taxon>Chlorobium</taxon>
    </lineage>
</organism>
<dbReference type="EC" id="2.4.2.1" evidence="1"/>
<dbReference type="EC" id="2.4.2.2" evidence="1"/>
<dbReference type="EMBL" id="CP000108">
    <property type="protein sequence ID" value="ABB27557.1"/>
    <property type="molecule type" value="Genomic_DNA"/>
</dbReference>
<dbReference type="SMR" id="Q3ATW8"/>
<dbReference type="STRING" id="340177.Cag_0281"/>
<dbReference type="KEGG" id="cch:Cag_0281"/>
<dbReference type="eggNOG" id="COG3123">
    <property type="taxonomic scope" value="Bacteria"/>
</dbReference>
<dbReference type="HOGENOM" id="CLU_157874_1_0_10"/>
<dbReference type="OrthoDB" id="9793848at2"/>
<dbReference type="GO" id="GO:0005829">
    <property type="term" value="C:cytosol"/>
    <property type="evidence" value="ECO:0007669"/>
    <property type="project" value="TreeGrafter"/>
</dbReference>
<dbReference type="GO" id="GO:0047975">
    <property type="term" value="F:guanosine phosphorylase activity"/>
    <property type="evidence" value="ECO:0007669"/>
    <property type="project" value="UniProtKB-EC"/>
</dbReference>
<dbReference type="GO" id="GO:0004731">
    <property type="term" value="F:purine-nucleoside phosphorylase activity"/>
    <property type="evidence" value="ECO:0007669"/>
    <property type="project" value="UniProtKB-UniRule"/>
</dbReference>
<dbReference type="GO" id="GO:0009032">
    <property type="term" value="F:thymidine phosphorylase activity"/>
    <property type="evidence" value="ECO:0007669"/>
    <property type="project" value="UniProtKB-EC"/>
</dbReference>
<dbReference type="GO" id="GO:0004850">
    <property type="term" value="F:uridine phosphorylase activity"/>
    <property type="evidence" value="ECO:0007669"/>
    <property type="project" value="UniProtKB-EC"/>
</dbReference>
<dbReference type="CDD" id="cd20296">
    <property type="entry name" value="cupin_PpnP-like"/>
    <property type="match status" value="1"/>
</dbReference>
<dbReference type="FunFam" id="2.60.120.10:FF:000016">
    <property type="entry name" value="Pyrimidine/purine nucleoside phosphorylase"/>
    <property type="match status" value="1"/>
</dbReference>
<dbReference type="Gene3D" id="2.60.120.10">
    <property type="entry name" value="Jelly Rolls"/>
    <property type="match status" value="1"/>
</dbReference>
<dbReference type="HAMAP" id="MF_01537">
    <property type="entry name" value="Nucleos_phosphorylase_PpnP"/>
    <property type="match status" value="1"/>
</dbReference>
<dbReference type="InterPro" id="IPR009664">
    <property type="entry name" value="Ppnp"/>
</dbReference>
<dbReference type="InterPro" id="IPR014710">
    <property type="entry name" value="RmlC-like_jellyroll"/>
</dbReference>
<dbReference type="InterPro" id="IPR011051">
    <property type="entry name" value="RmlC_Cupin_sf"/>
</dbReference>
<dbReference type="PANTHER" id="PTHR36540">
    <property type="entry name" value="PYRIMIDINE/PURINE NUCLEOSIDE PHOSPHORYLASE"/>
    <property type="match status" value="1"/>
</dbReference>
<dbReference type="PANTHER" id="PTHR36540:SF1">
    <property type="entry name" value="PYRIMIDINE_PURINE NUCLEOSIDE PHOSPHORYLASE"/>
    <property type="match status" value="1"/>
</dbReference>
<dbReference type="Pfam" id="PF06865">
    <property type="entry name" value="Ppnp"/>
    <property type="match status" value="1"/>
</dbReference>
<dbReference type="SUPFAM" id="SSF51182">
    <property type="entry name" value="RmlC-like cupins"/>
    <property type="match status" value="1"/>
</dbReference>
<reference key="1">
    <citation type="submission" date="2005-08" db="EMBL/GenBank/DDBJ databases">
        <title>Complete sequence of Chlorobium chlorochromatii CaD3.</title>
        <authorList>
            <consortium name="US DOE Joint Genome Institute"/>
            <person name="Copeland A."/>
            <person name="Lucas S."/>
            <person name="Lapidus A."/>
            <person name="Barry K."/>
            <person name="Detter J.C."/>
            <person name="Glavina T."/>
            <person name="Hammon N."/>
            <person name="Israni S."/>
            <person name="Pitluck S."/>
            <person name="Bryant D."/>
            <person name="Schmutz J."/>
            <person name="Larimer F."/>
            <person name="Land M."/>
            <person name="Kyrpides N."/>
            <person name="Ivanova N."/>
            <person name="Richardson P."/>
        </authorList>
    </citation>
    <scope>NUCLEOTIDE SEQUENCE [LARGE SCALE GENOMIC DNA]</scope>
    <source>
        <strain>CaD3</strain>
    </source>
</reference>
<comment type="function">
    <text evidence="1">Catalyzes the phosphorolysis of diverse nucleosides, yielding D-ribose 1-phosphate and the respective free bases. Can use uridine, adenosine, guanosine, cytidine, thymidine, inosine and xanthosine as substrates. Also catalyzes the reverse reactions.</text>
</comment>
<comment type="catalytic activity">
    <reaction evidence="1">
        <text>a purine D-ribonucleoside + phosphate = a purine nucleobase + alpha-D-ribose 1-phosphate</text>
        <dbReference type="Rhea" id="RHEA:19805"/>
        <dbReference type="ChEBI" id="CHEBI:26386"/>
        <dbReference type="ChEBI" id="CHEBI:43474"/>
        <dbReference type="ChEBI" id="CHEBI:57720"/>
        <dbReference type="ChEBI" id="CHEBI:142355"/>
        <dbReference type="EC" id="2.4.2.1"/>
    </reaction>
</comment>
<comment type="catalytic activity">
    <reaction evidence="1">
        <text>adenosine + phosphate = alpha-D-ribose 1-phosphate + adenine</text>
        <dbReference type="Rhea" id="RHEA:27642"/>
        <dbReference type="ChEBI" id="CHEBI:16335"/>
        <dbReference type="ChEBI" id="CHEBI:16708"/>
        <dbReference type="ChEBI" id="CHEBI:43474"/>
        <dbReference type="ChEBI" id="CHEBI:57720"/>
        <dbReference type="EC" id="2.4.2.1"/>
    </reaction>
</comment>
<comment type="catalytic activity">
    <reaction evidence="1">
        <text>cytidine + phosphate = cytosine + alpha-D-ribose 1-phosphate</text>
        <dbReference type="Rhea" id="RHEA:52540"/>
        <dbReference type="ChEBI" id="CHEBI:16040"/>
        <dbReference type="ChEBI" id="CHEBI:17562"/>
        <dbReference type="ChEBI" id="CHEBI:43474"/>
        <dbReference type="ChEBI" id="CHEBI:57720"/>
        <dbReference type="EC" id="2.4.2.2"/>
    </reaction>
</comment>
<comment type="catalytic activity">
    <reaction evidence="1">
        <text>guanosine + phosphate = alpha-D-ribose 1-phosphate + guanine</text>
        <dbReference type="Rhea" id="RHEA:13233"/>
        <dbReference type="ChEBI" id="CHEBI:16235"/>
        <dbReference type="ChEBI" id="CHEBI:16750"/>
        <dbReference type="ChEBI" id="CHEBI:43474"/>
        <dbReference type="ChEBI" id="CHEBI:57720"/>
        <dbReference type="EC" id="2.4.2.1"/>
    </reaction>
</comment>
<comment type="catalytic activity">
    <reaction evidence="1">
        <text>inosine + phosphate = alpha-D-ribose 1-phosphate + hypoxanthine</text>
        <dbReference type="Rhea" id="RHEA:27646"/>
        <dbReference type="ChEBI" id="CHEBI:17368"/>
        <dbReference type="ChEBI" id="CHEBI:17596"/>
        <dbReference type="ChEBI" id="CHEBI:43474"/>
        <dbReference type="ChEBI" id="CHEBI:57720"/>
        <dbReference type="EC" id="2.4.2.1"/>
    </reaction>
</comment>
<comment type="catalytic activity">
    <reaction evidence="1">
        <text>thymidine + phosphate = 2-deoxy-alpha-D-ribose 1-phosphate + thymine</text>
        <dbReference type="Rhea" id="RHEA:16037"/>
        <dbReference type="ChEBI" id="CHEBI:17748"/>
        <dbReference type="ChEBI" id="CHEBI:17821"/>
        <dbReference type="ChEBI" id="CHEBI:43474"/>
        <dbReference type="ChEBI" id="CHEBI:57259"/>
        <dbReference type="EC" id="2.4.2.2"/>
    </reaction>
</comment>
<comment type="catalytic activity">
    <reaction evidence="1">
        <text>uridine + phosphate = alpha-D-ribose 1-phosphate + uracil</text>
        <dbReference type="Rhea" id="RHEA:24388"/>
        <dbReference type="ChEBI" id="CHEBI:16704"/>
        <dbReference type="ChEBI" id="CHEBI:17568"/>
        <dbReference type="ChEBI" id="CHEBI:43474"/>
        <dbReference type="ChEBI" id="CHEBI:57720"/>
        <dbReference type="EC" id="2.4.2.2"/>
    </reaction>
</comment>
<comment type="catalytic activity">
    <reaction evidence="1">
        <text>xanthosine + phosphate = alpha-D-ribose 1-phosphate + xanthine</text>
        <dbReference type="Rhea" id="RHEA:27638"/>
        <dbReference type="ChEBI" id="CHEBI:17712"/>
        <dbReference type="ChEBI" id="CHEBI:18107"/>
        <dbReference type="ChEBI" id="CHEBI:43474"/>
        <dbReference type="ChEBI" id="CHEBI:57720"/>
        <dbReference type="EC" id="2.4.2.1"/>
    </reaction>
</comment>
<comment type="similarity">
    <text evidence="1">Belongs to the nucleoside phosphorylase PpnP family.</text>
</comment>
<accession>Q3ATW8</accession>
<feature type="chain" id="PRO_0000298690" description="Pyrimidine/purine nucleoside phosphorylase">
    <location>
        <begin position="1"/>
        <end position="103"/>
    </location>
</feature>